<accession>Q8Z540</accession>
<keyword id="KW-0046">Antibiotic resistance</keyword>
<keyword id="KW-0441">Lipid A biosynthesis</keyword>
<keyword id="KW-0444">Lipid biosynthesis</keyword>
<keyword id="KW-0443">Lipid metabolism</keyword>
<keyword id="KW-0448">Lipopolysaccharide biosynthesis</keyword>
<keyword id="KW-0511">Multifunctional enzyme</keyword>
<keyword id="KW-0520">NAD</keyword>
<keyword id="KW-0560">Oxidoreductase</keyword>
<keyword id="KW-0808">Transferase</keyword>
<gene>
    <name evidence="1" type="primary">arnA</name>
    <name type="ordered locus">STY2529</name>
    <name type="ordered locus">t0564</name>
</gene>
<feature type="chain" id="PRO_0000083108" description="Bifunctional polymyxin resistance protein ArnA">
    <location>
        <begin position="1"/>
        <end position="660"/>
    </location>
</feature>
<feature type="region of interest" description="Formyltransferase ArnAFT">
    <location>
        <begin position="1"/>
        <end position="304"/>
    </location>
</feature>
<feature type="region of interest" description="Dehydrogenase ArnADH">
    <location>
        <begin position="314"/>
        <end position="660"/>
    </location>
</feature>
<feature type="active site" description="Proton donor; for formyltransferase activity" evidence="1">
    <location>
        <position position="104"/>
    </location>
</feature>
<feature type="active site" description="Proton acceptor; for decarboxylase activity" evidence="1">
    <location>
        <position position="434"/>
    </location>
</feature>
<feature type="active site" description="Proton donor; for decarboxylase activity" evidence="1">
    <location>
        <position position="619"/>
    </location>
</feature>
<feature type="binding site" evidence="1">
    <location>
        <position position="114"/>
    </location>
    <ligand>
        <name>(6R)-10-formyltetrahydrofolate</name>
        <dbReference type="ChEBI" id="CHEBI:195366"/>
    </ligand>
</feature>
<feature type="binding site" evidence="1">
    <location>
        <begin position="136"/>
        <end position="140"/>
    </location>
    <ligand>
        <name>(6R)-10-formyltetrahydrofolate</name>
        <dbReference type="ChEBI" id="CHEBI:195366"/>
    </ligand>
</feature>
<feature type="binding site" evidence="1">
    <location>
        <position position="347"/>
    </location>
    <ligand>
        <name>NAD(+)</name>
        <dbReference type="ChEBI" id="CHEBI:57540"/>
    </ligand>
</feature>
<feature type="binding site" evidence="1">
    <location>
        <begin position="368"/>
        <end position="369"/>
    </location>
    <ligand>
        <name>NAD(+)</name>
        <dbReference type="ChEBI" id="CHEBI:57540"/>
    </ligand>
</feature>
<feature type="binding site" evidence="1">
    <location>
        <position position="393"/>
    </location>
    <ligand>
        <name>UDP-alpha-D-glucuronate</name>
        <dbReference type="ChEBI" id="CHEBI:58052"/>
    </ligand>
</feature>
<feature type="binding site" evidence="1">
    <location>
        <position position="398"/>
    </location>
    <ligand>
        <name>UDP-alpha-D-glucuronate</name>
        <dbReference type="ChEBI" id="CHEBI:58052"/>
    </ligand>
</feature>
<feature type="binding site" evidence="1">
    <location>
        <begin position="432"/>
        <end position="433"/>
    </location>
    <ligand>
        <name>UDP-alpha-D-glucuronate</name>
        <dbReference type="ChEBI" id="CHEBI:58052"/>
    </ligand>
</feature>
<feature type="binding site" evidence="1">
    <location>
        <position position="460"/>
    </location>
    <ligand>
        <name>UDP-alpha-D-glucuronate</name>
        <dbReference type="ChEBI" id="CHEBI:58052"/>
    </ligand>
</feature>
<feature type="binding site" evidence="1">
    <location>
        <position position="492"/>
    </location>
    <ligand>
        <name>UDP-alpha-D-glucuronate</name>
        <dbReference type="ChEBI" id="CHEBI:58052"/>
    </ligand>
</feature>
<feature type="binding site" evidence="1">
    <location>
        <begin position="526"/>
        <end position="535"/>
    </location>
    <ligand>
        <name>UDP-alpha-D-glucuronate</name>
        <dbReference type="ChEBI" id="CHEBI:58052"/>
    </ligand>
</feature>
<feature type="binding site" evidence="1">
    <location>
        <position position="613"/>
    </location>
    <ligand>
        <name>UDP-alpha-D-glucuronate</name>
        <dbReference type="ChEBI" id="CHEBI:58052"/>
    </ligand>
</feature>
<feature type="site" description="Transition state stabilizer" evidence="1">
    <location>
        <position position="102"/>
    </location>
</feature>
<feature type="site" description="Raises pKa of active site His" evidence="1">
    <location>
        <position position="140"/>
    </location>
</feature>
<feature type="sequence conflict" description="In Ref. 2; AAO68270." evidence="2" ref="2">
    <original>P</original>
    <variation>L</variation>
    <location>
        <position position="36"/>
    </location>
</feature>
<evidence type="ECO:0000255" key="1">
    <source>
        <dbReference type="HAMAP-Rule" id="MF_01166"/>
    </source>
</evidence>
<evidence type="ECO:0000305" key="2"/>
<dbReference type="EC" id="2.1.2.13" evidence="1"/>
<dbReference type="EC" id="1.1.1.305" evidence="1"/>
<dbReference type="EMBL" id="AL513382">
    <property type="protein sequence ID" value="CAD07532.1"/>
    <property type="molecule type" value="Genomic_DNA"/>
</dbReference>
<dbReference type="EMBL" id="AE014613">
    <property type="protein sequence ID" value="AAO68270.1"/>
    <property type="molecule type" value="Genomic_DNA"/>
</dbReference>
<dbReference type="RefSeq" id="NP_456842.1">
    <property type="nucleotide sequence ID" value="NC_003198.1"/>
</dbReference>
<dbReference type="RefSeq" id="WP_000648774.1">
    <property type="nucleotide sequence ID" value="NZ_WSUR01000039.1"/>
</dbReference>
<dbReference type="SMR" id="Q8Z540"/>
<dbReference type="STRING" id="220341.gene:17586429"/>
<dbReference type="KEGG" id="stt:t0564"/>
<dbReference type="KEGG" id="sty:STY2529"/>
<dbReference type="PATRIC" id="fig|220341.7.peg.2560"/>
<dbReference type="eggNOG" id="COG0223">
    <property type="taxonomic scope" value="Bacteria"/>
</dbReference>
<dbReference type="eggNOG" id="COG0451">
    <property type="taxonomic scope" value="Bacteria"/>
</dbReference>
<dbReference type="HOGENOM" id="CLU_007383_23_2_6"/>
<dbReference type="OMA" id="VRYCVKY"/>
<dbReference type="OrthoDB" id="9802815at2"/>
<dbReference type="UniPathway" id="UPA00030"/>
<dbReference type="UniPathway" id="UPA00032">
    <property type="reaction ID" value="UER00492"/>
</dbReference>
<dbReference type="UniPathway" id="UPA00032">
    <property type="reaction ID" value="UER00494"/>
</dbReference>
<dbReference type="Proteomes" id="UP000000541">
    <property type="component" value="Chromosome"/>
</dbReference>
<dbReference type="Proteomes" id="UP000002670">
    <property type="component" value="Chromosome"/>
</dbReference>
<dbReference type="GO" id="GO:0016020">
    <property type="term" value="C:membrane"/>
    <property type="evidence" value="ECO:0007669"/>
    <property type="project" value="GOC"/>
</dbReference>
<dbReference type="GO" id="GO:0016831">
    <property type="term" value="F:carboxy-lyase activity"/>
    <property type="evidence" value="ECO:0007669"/>
    <property type="project" value="InterPro"/>
</dbReference>
<dbReference type="GO" id="GO:0099619">
    <property type="term" value="F:UDP-4-amino-4-deoxy-L-arabinose formyltransferase activity"/>
    <property type="evidence" value="ECO:0007669"/>
    <property type="project" value="UniProtKB-EC"/>
</dbReference>
<dbReference type="GO" id="GO:0099618">
    <property type="term" value="F:UDP-glucuronate dehydrogenase activity"/>
    <property type="evidence" value="ECO:0007669"/>
    <property type="project" value="UniProtKB-EC"/>
</dbReference>
<dbReference type="GO" id="GO:0009245">
    <property type="term" value="P:lipid A biosynthetic process"/>
    <property type="evidence" value="ECO:0007669"/>
    <property type="project" value="UniProtKB-KW"/>
</dbReference>
<dbReference type="GO" id="GO:0009103">
    <property type="term" value="P:lipopolysaccharide biosynthetic process"/>
    <property type="evidence" value="ECO:0007669"/>
    <property type="project" value="UniProtKB-UniRule"/>
</dbReference>
<dbReference type="GO" id="GO:0046677">
    <property type="term" value="P:response to antibiotic"/>
    <property type="evidence" value="ECO:0007669"/>
    <property type="project" value="UniProtKB-KW"/>
</dbReference>
<dbReference type="CDD" id="cd08702">
    <property type="entry name" value="Arna_FMT_C"/>
    <property type="match status" value="1"/>
</dbReference>
<dbReference type="CDD" id="cd05257">
    <property type="entry name" value="Arna_like_SDR_e"/>
    <property type="match status" value="1"/>
</dbReference>
<dbReference type="FunFam" id="3.40.50.720:FF:000197">
    <property type="entry name" value="Bifunctional polymyxin resistance protein ArnA"/>
    <property type="match status" value="1"/>
</dbReference>
<dbReference type="Gene3D" id="3.40.50.12230">
    <property type="match status" value="1"/>
</dbReference>
<dbReference type="Gene3D" id="3.40.50.720">
    <property type="entry name" value="NAD(P)-binding Rossmann-like Domain"/>
    <property type="match status" value="1"/>
</dbReference>
<dbReference type="HAMAP" id="MF_01166">
    <property type="entry name" value="ArnA"/>
    <property type="match status" value="1"/>
</dbReference>
<dbReference type="InterPro" id="IPR045869">
    <property type="entry name" value="Arna-like_SDR_e"/>
</dbReference>
<dbReference type="InterPro" id="IPR021168">
    <property type="entry name" value="Bifun_polymyxin_resist_ArnA"/>
</dbReference>
<dbReference type="InterPro" id="IPR001509">
    <property type="entry name" value="Epimerase_deHydtase"/>
</dbReference>
<dbReference type="InterPro" id="IPR005793">
    <property type="entry name" value="Formyl_trans_C"/>
</dbReference>
<dbReference type="InterPro" id="IPR002376">
    <property type="entry name" value="Formyl_transf_N"/>
</dbReference>
<dbReference type="InterPro" id="IPR036477">
    <property type="entry name" value="Formyl_transf_N_sf"/>
</dbReference>
<dbReference type="InterPro" id="IPR011034">
    <property type="entry name" value="Formyl_transferase-like_C_sf"/>
</dbReference>
<dbReference type="InterPro" id="IPR050177">
    <property type="entry name" value="Lipid_A_modif_metabolic_enz"/>
</dbReference>
<dbReference type="InterPro" id="IPR036291">
    <property type="entry name" value="NAD(P)-bd_dom_sf"/>
</dbReference>
<dbReference type="NCBIfam" id="NF005414">
    <property type="entry name" value="PRK06988.1"/>
    <property type="match status" value="1"/>
</dbReference>
<dbReference type="NCBIfam" id="NF005998">
    <property type="entry name" value="PRK08125.1"/>
    <property type="match status" value="1"/>
</dbReference>
<dbReference type="NCBIfam" id="NF008872">
    <property type="entry name" value="PRK11908.1"/>
    <property type="match status" value="1"/>
</dbReference>
<dbReference type="PANTHER" id="PTHR43245">
    <property type="entry name" value="BIFUNCTIONAL POLYMYXIN RESISTANCE PROTEIN ARNA"/>
    <property type="match status" value="1"/>
</dbReference>
<dbReference type="PANTHER" id="PTHR43245:SF13">
    <property type="entry name" value="UDP-D-APIOSE_UDP-D-XYLOSE SYNTHASE 2"/>
    <property type="match status" value="1"/>
</dbReference>
<dbReference type="Pfam" id="PF01370">
    <property type="entry name" value="Epimerase"/>
    <property type="match status" value="1"/>
</dbReference>
<dbReference type="Pfam" id="PF02911">
    <property type="entry name" value="Formyl_trans_C"/>
    <property type="match status" value="1"/>
</dbReference>
<dbReference type="Pfam" id="PF00551">
    <property type="entry name" value="Formyl_trans_N"/>
    <property type="match status" value="1"/>
</dbReference>
<dbReference type="PIRSF" id="PIRSF036506">
    <property type="entry name" value="Bifun_polymyxin_resist_ArnA"/>
    <property type="match status" value="1"/>
</dbReference>
<dbReference type="SUPFAM" id="SSF50486">
    <property type="entry name" value="FMT C-terminal domain-like"/>
    <property type="match status" value="1"/>
</dbReference>
<dbReference type="SUPFAM" id="SSF53328">
    <property type="entry name" value="Formyltransferase"/>
    <property type="match status" value="1"/>
</dbReference>
<dbReference type="SUPFAM" id="SSF51735">
    <property type="entry name" value="NAD(P)-binding Rossmann-fold domains"/>
    <property type="match status" value="1"/>
</dbReference>
<organism>
    <name type="scientific">Salmonella typhi</name>
    <dbReference type="NCBI Taxonomy" id="90370"/>
    <lineage>
        <taxon>Bacteria</taxon>
        <taxon>Pseudomonadati</taxon>
        <taxon>Pseudomonadota</taxon>
        <taxon>Gammaproteobacteria</taxon>
        <taxon>Enterobacterales</taxon>
        <taxon>Enterobacteriaceae</taxon>
        <taxon>Salmonella</taxon>
    </lineage>
</organism>
<proteinExistence type="inferred from homology"/>
<sequence length="660" mass="73428">MKAVIFAYHDMGCQGVQAVLDAGYEIAAIFTHADNPAENTFFGSVSRLAAGLGIPVYAPDNVNHPIWVDRIAELAPDIIFSFYYRNLLSEEILHLAPAGAFNLHGSLLPAYRGRAPLNWVLVNGESETGVTLHRMVKRADAGEIVASQRVAIAQDDVALTLHHKLCQAARQLLNSILPTMKCGNIPSVPQRESDATYYGRRRPEDGLIDWHKPVSTVHNLVRAVAAPWPGAFSYNGSQKFTIWSSRICPDAQGALPGSVISVSPLRVACADGALEIITGQAGDGITVQGSQLAQTLGLVAGACLNRPPATSGKRRIRVLILGVNGFIGNHLTERLLDEENYEVYGMDIGSNAISRFLLHPRFHFVEGDISIHSEWIEYHVKKCDVVLPLVAIATPIEYTRNPLRVFELDFEENLRIIRYCVKYRKRVVFPSTSEVYGMCTDASFDEDKSNLIVGPVNKPRWIYSVSKQLLDRVIWAYGEKEGLRFTLFRPFNWMGPRLDSLNAARIGSSRAITQLILNLVEGTPIKLIDGGQQKRCFTDIRDGIEALFRIIVNEGDRCDGKIINIGNPDNEASIQELATLLLDSFDKHPLRCHFPPFAGFQVVESRSYYGKGYQDVAHRKPSIDNARRCLDWEPSIAMRDTVEETLDFFLRSVDIAERAS</sequence>
<reference key="1">
    <citation type="journal article" date="2001" name="Nature">
        <title>Complete genome sequence of a multiple drug resistant Salmonella enterica serovar Typhi CT18.</title>
        <authorList>
            <person name="Parkhill J."/>
            <person name="Dougan G."/>
            <person name="James K.D."/>
            <person name="Thomson N.R."/>
            <person name="Pickard D."/>
            <person name="Wain J."/>
            <person name="Churcher C.M."/>
            <person name="Mungall K.L."/>
            <person name="Bentley S.D."/>
            <person name="Holden M.T.G."/>
            <person name="Sebaihia M."/>
            <person name="Baker S."/>
            <person name="Basham D."/>
            <person name="Brooks K."/>
            <person name="Chillingworth T."/>
            <person name="Connerton P."/>
            <person name="Cronin A."/>
            <person name="Davis P."/>
            <person name="Davies R.M."/>
            <person name="Dowd L."/>
            <person name="White N."/>
            <person name="Farrar J."/>
            <person name="Feltwell T."/>
            <person name="Hamlin N."/>
            <person name="Haque A."/>
            <person name="Hien T.T."/>
            <person name="Holroyd S."/>
            <person name="Jagels K."/>
            <person name="Krogh A."/>
            <person name="Larsen T.S."/>
            <person name="Leather S."/>
            <person name="Moule S."/>
            <person name="O'Gaora P."/>
            <person name="Parry C."/>
            <person name="Quail M.A."/>
            <person name="Rutherford K.M."/>
            <person name="Simmonds M."/>
            <person name="Skelton J."/>
            <person name="Stevens K."/>
            <person name="Whitehead S."/>
            <person name="Barrell B.G."/>
        </authorList>
    </citation>
    <scope>NUCLEOTIDE SEQUENCE [LARGE SCALE GENOMIC DNA]</scope>
    <source>
        <strain>CT18</strain>
    </source>
</reference>
<reference key="2">
    <citation type="journal article" date="2003" name="J. Bacteriol.">
        <title>Comparative genomics of Salmonella enterica serovar Typhi strains Ty2 and CT18.</title>
        <authorList>
            <person name="Deng W."/>
            <person name="Liou S.-R."/>
            <person name="Plunkett G. III"/>
            <person name="Mayhew G.F."/>
            <person name="Rose D.J."/>
            <person name="Burland V."/>
            <person name="Kodoyianni V."/>
            <person name="Schwartz D.C."/>
            <person name="Blattner F.R."/>
        </authorList>
    </citation>
    <scope>NUCLEOTIDE SEQUENCE [LARGE SCALE GENOMIC DNA]</scope>
    <source>
        <strain>ATCC 700931 / Ty2</strain>
    </source>
</reference>
<protein>
    <recommendedName>
        <fullName evidence="1">Bifunctional polymyxin resistance protein ArnA</fullName>
    </recommendedName>
    <domain>
        <recommendedName>
            <fullName evidence="1">UDP-4-amino-4-deoxy-L-arabinose formyltransferase</fullName>
            <ecNumber evidence="1">2.1.2.13</ecNumber>
        </recommendedName>
        <alternativeName>
            <fullName evidence="1">ArnAFT</fullName>
        </alternativeName>
        <alternativeName>
            <fullName evidence="1">UDP-L-Ara4N formyltransferase</fullName>
        </alternativeName>
    </domain>
    <domain>
        <recommendedName>
            <fullName evidence="1">UDP-glucuronic acid oxidase, UDP-4-keto-hexauronic acid decarboxylating</fullName>
            <ecNumber evidence="1">1.1.1.305</ecNumber>
        </recommendedName>
        <alternativeName>
            <fullName evidence="1">ArnADH</fullName>
        </alternativeName>
        <alternativeName>
            <fullName evidence="1">UDP-GlcUA decarboxylase</fullName>
        </alternativeName>
        <alternativeName>
            <fullName evidence="1">UDP-glucuronic acid dehydrogenase</fullName>
        </alternativeName>
    </domain>
</protein>
<name>ARNA_SALTI</name>
<comment type="function">
    <text evidence="1">Bifunctional enzyme that catalyzes the oxidative decarboxylation of UDP-glucuronic acid (UDP-GlcUA) to UDP-4-keto-arabinose (UDP-Ara4O) and the addition of a formyl group to UDP-4-amino-4-deoxy-L-arabinose (UDP-L-Ara4N) to form UDP-L-4-formamido-arabinose (UDP-L-Ara4FN). The modified arabinose is attached to lipid A and is required for resistance to polymyxin and cationic antimicrobial peptides.</text>
</comment>
<comment type="catalytic activity">
    <reaction evidence="1">
        <text>UDP-alpha-D-glucuronate + NAD(+) = UDP-beta-L-threo-pentopyranos-4-ulose + CO2 + NADH</text>
        <dbReference type="Rhea" id="RHEA:24702"/>
        <dbReference type="ChEBI" id="CHEBI:16526"/>
        <dbReference type="ChEBI" id="CHEBI:57540"/>
        <dbReference type="ChEBI" id="CHEBI:57945"/>
        <dbReference type="ChEBI" id="CHEBI:58052"/>
        <dbReference type="ChEBI" id="CHEBI:58710"/>
        <dbReference type="EC" id="1.1.1.305"/>
    </reaction>
</comment>
<comment type="catalytic activity">
    <reaction evidence="1">
        <text>UDP-4-amino-4-deoxy-beta-L-arabinose + (6R)-10-formyltetrahydrofolate = UDP-4-deoxy-4-formamido-beta-L-arabinose + (6S)-5,6,7,8-tetrahydrofolate + H(+)</text>
        <dbReference type="Rhea" id="RHEA:24706"/>
        <dbReference type="ChEBI" id="CHEBI:15378"/>
        <dbReference type="ChEBI" id="CHEBI:57453"/>
        <dbReference type="ChEBI" id="CHEBI:58708"/>
        <dbReference type="ChEBI" id="CHEBI:58709"/>
        <dbReference type="ChEBI" id="CHEBI:195366"/>
        <dbReference type="EC" id="2.1.2.13"/>
    </reaction>
</comment>
<comment type="pathway">
    <text evidence="1">Nucleotide-sugar biosynthesis; UDP-4-deoxy-4-formamido-beta-L-arabinose biosynthesis; UDP-4-deoxy-4-formamido-beta-L-arabinose from UDP-alpha-D-glucuronate: step 1/3.</text>
</comment>
<comment type="pathway">
    <text evidence="1">Nucleotide-sugar biosynthesis; UDP-4-deoxy-4-formamido-beta-L-arabinose biosynthesis; UDP-4-deoxy-4-formamido-beta-L-arabinose from UDP-alpha-D-glucuronate: step 3/3.</text>
</comment>
<comment type="pathway">
    <text evidence="1">Bacterial outer membrane biogenesis; lipopolysaccharide biosynthesis.</text>
</comment>
<comment type="subunit">
    <text evidence="1">Homohexamer, formed by a dimer of trimers.</text>
</comment>
<comment type="similarity">
    <text evidence="1">In the N-terminal section; belongs to the Fmt family. UDP-L-Ara4N formyltransferase subfamily.</text>
</comment>
<comment type="similarity">
    <text evidence="1">In the C-terminal section; belongs to the NAD(P)-dependent epimerase/dehydratase family. UDP-glucuronic acid decarboxylase subfamily.</text>
</comment>